<sequence length="19" mass="2161">VIGGDECNINEHRFLVAXY</sequence>
<comment type="function">
    <text evidence="3">Thrombin-like snake venom serine protease that cleaves alpha-chain of fibrinogen (FGA) releasing fibrinopeptide A. Has high clotting activity.</text>
</comment>
<comment type="activity regulation">
    <text evidence="3">Its proteolytic activity is inhibited by PMSF and TPCK.</text>
</comment>
<comment type="biophysicochemical properties">
    <phDependence>
        <text evidence="3">Optimum pH is 8.</text>
    </phDependence>
    <temperatureDependence>
        <text evidence="3">Optimum temperature is between 20 and 40 degrees Celsius.</text>
    </temperatureDependence>
</comment>
<comment type="subunit">
    <text evidence="3">Monomer.</text>
</comment>
<comment type="subcellular location">
    <subcellularLocation>
        <location evidence="3">Secreted</location>
    </subcellularLocation>
</comment>
<comment type="tissue specificity">
    <text>Expressed by the venom gland.</text>
</comment>
<comment type="PTM">
    <text evidence="1">N-glycosylated.</text>
</comment>
<comment type="similarity">
    <text evidence="2">Belongs to the peptidase S1 family. Snake venom subfamily.</text>
</comment>
<feature type="chain" id="PRO_0000295819" description="Thrombin-like enzyme calobin-2">
    <location>
        <begin position="1"/>
        <end position="19" status="greater than"/>
    </location>
</feature>
<feature type="domain" description="Peptidase S1" evidence="2">
    <location>
        <begin position="1"/>
        <end position="19" status="greater than"/>
    </location>
</feature>
<feature type="non-terminal residue">
    <location>
        <position position="19"/>
    </location>
</feature>
<keyword id="KW-1204">Blood coagulation cascade activating toxin</keyword>
<keyword id="KW-0903">Direct protein sequencing</keyword>
<keyword id="KW-0325">Glycoprotein</keyword>
<keyword id="KW-1199">Hemostasis impairing toxin</keyword>
<keyword id="KW-0378">Hydrolase</keyword>
<keyword id="KW-0645">Protease</keyword>
<keyword id="KW-0964">Secreted</keyword>
<keyword id="KW-0720">Serine protease</keyword>
<keyword id="KW-0800">Toxin</keyword>
<protein>
    <recommendedName>
        <fullName>Thrombin-like enzyme calobin-2</fullName>
        <shortName>SVTLE</shortName>
        <ecNumber>3.4.21.-</ecNumber>
    </recommendedName>
    <alternativeName>
        <fullName>Calobin II</fullName>
    </alternativeName>
    <alternativeName>
        <fullName>Fibrinogen-clotting enzyme</fullName>
    </alternativeName>
    <alternativeName>
        <fullName>Snake venom serine protease</fullName>
        <shortName>SVSP</shortName>
    </alternativeName>
</protein>
<name>VSP2_GLOUS</name>
<organism>
    <name type="scientific">Gloydius ussuriensis</name>
    <name type="common">Ussuri mamushi</name>
    <name type="synonym">Gloydius blomhoffii ussuriensis</name>
    <dbReference type="NCBI Taxonomy" id="35671"/>
    <lineage>
        <taxon>Eukaryota</taxon>
        <taxon>Metazoa</taxon>
        <taxon>Chordata</taxon>
        <taxon>Craniata</taxon>
        <taxon>Vertebrata</taxon>
        <taxon>Euteleostomi</taxon>
        <taxon>Lepidosauria</taxon>
        <taxon>Squamata</taxon>
        <taxon>Bifurcata</taxon>
        <taxon>Unidentata</taxon>
        <taxon>Episquamata</taxon>
        <taxon>Toxicofera</taxon>
        <taxon>Serpentes</taxon>
        <taxon>Colubroidea</taxon>
        <taxon>Viperidae</taxon>
        <taxon>Crotalinae</taxon>
        <taxon>Gloydius</taxon>
    </lineage>
</organism>
<evidence type="ECO:0000250" key="1"/>
<evidence type="ECO:0000255" key="2">
    <source>
        <dbReference type="PROSITE-ProRule" id="PRU00274"/>
    </source>
</evidence>
<evidence type="ECO:0000269" key="3">
    <source>
    </source>
</evidence>
<accession>P0C590</accession>
<dbReference type="EC" id="3.4.21.-"/>
<dbReference type="GO" id="GO:0005576">
    <property type="term" value="C:extracellular region"/>
    <property type="evidence" value="ECO:0007669"/>
    <property type="project" value="UniProtKB-SubCell"/>
</dbReference>
<dbReference type="GO" id="GO:0008236">
    <property type="term" value="F:serine-type peptidase activity"/>
    <property type="evidence" value="ECO:0007669"/>
    <property type="project" value="UniProtKB-KW"/>
</dbReference>
<dbReference type="GO" id="GO:0090729">
    <property type="term" value="F:toxin activity"/>
    <property type="evidence" value="ECO:0007669"/>
    <property type="project" value="UniProtKB-KW"/>
</dbReference>
<dbReference type="GO" id="GO:0006508">
    <property type="term" value="P:proteolysis"/>
    <property type="evidence" value="ECO:0007669"/>
    <property type="project" value="UniProtKB-KW"/>
</dbReference>
<reference key="1">
    <citation type="journal article" date="2001" name="Toxicon">
        <title>Purification and characterization of calobin II, a second type of thrombin-like enzyme from Agkistrodon caliginosus (Korean viper).</title>
        <authorList>
            <person name="Cho S.Y."/>
            <person name="Hahn B.-S."/>
            <person name="Yang K.Y."/>
            <person name="Kim Y.S."/>
        </authorList>
    </citation>
    <scope>PROTEIN SEQUENCE</scope>
    <scope>FUNCTION</scope>
    <scope>ACTIVITY REGULATION</scope>
    <scope>BIOPHYSICOCHEMICAL PROPERTIES</scope>
    <scope>SUBUNIT</scope>
    <scope>SUBCELLULAR LOCATION</scope>
    <source>
        <tissue>Venom</tissue>
    </source>
</reference>
<proteinExistence type="evidence at protein level"/>